<organism>
    <name type="scientific">Escherichia coli O6:K15:H31 (strain 536 / UPEC)</name>
    <dbReference type="NCBI Taxonomy" id="362663"/>
    <lineage>
        <taxon>Bacteria</taxon>
        <taxon>Pseudomonadati</taxon>
        <taxon>Pseudomonadota</taxon>
        <taxon>Gammaproteobacteria</taxon>
        <taxon>Enterobacterales</taxon>
        <taxon>Enterobacteriaceae</taxon>
        <taxon>Escherichia</taxon>
    </lineage>
</organism>
<comment type="function">
    <text evidence="1">Transcription regulator that activates transcription by stimulating RNA polymerase (RNAP) recycling in case of stress conditions such as supercoiled DNA or high salt concentrations. Probably acts by releasing the RNAP, when it is trapped or immobilized on tightly supercoiled DNA. Does not activate transcription on linear DNA. Probably not involved in DNA repair.</text>
</comment>
<comment type="subunit">
    <text evidence="1">Interacts with the RNAP. Has a higher affinity for the core RNAP than for the holoenzyme. Its ATPase activity is stimulated by binding to RNAP.</text>
</comment>
<comment type="similarity">
    <text evidence="1">Belongs to the SNF2/RAD54 helicase family. RapA subfamily.</text>
</comment>
<gene>
    <name evidence="1" type="primary">rapA</name>
    <name type="ordered locus">ECP_0060</name>
</gene>
<protein>
    <recommendedName>
        <fullName evidence="1">RNA polymerase-associated protein RapA</fullName>
        <ecNumber evidence="1">3.6.4.-</ecNumber>
    </recommendedName>
    <alternativeName>
        <fullName evidence="1">ATP-dependent helicase HepA</fullName>
    </alternativeName>
</protein>
<keyword id="KW-0010">Activator</keyword>
<keyword id="KW-0067">ATP-binding</keyword>
<keyword id="KW-0238">DNA-binding</keyword>
<keyword id="KW-0347">Helicase</keyword>
<keyword id="KW-0378">Hydrolase</keyword>
<keyword id="KW-0547">Nucleotide-binding</keyword>
<keyword id="KW-0804">Transcription</keyword>
<keyword id="KW-0805">Transcription regulation</keyword>
<feature type="chain" id="PRO_1000088354" description="RNA polymerase-associated protein RapA">
    <location>
        <begin position="1"/>
        <end position="968"/>
    </location>
</feature>
<feature type="domain" description="Helicase ATP-binding" evidence="1">
    <location>
        <begin position="164"/>
        <end position="334"/>
    </location>
</feature>
<feature type="domain" description="Helicase C-terminal" evidence="1">
    <location>
        <begin position="490"/>
        <end position="662"/>
    </location>
</feature>
<feature type="short sequence motif" description="DEAH box">
    <location>
        <begin position="280"/>
        <end position="283"/>
    </location>
</feature>
<feature type="binding site" evidence="1">
    <location>
        <begin position="177"/>
        <end position="184"/>
    </location>
    <ligand>
        <name>ATP</name>
        <dbReference type="ChEBI" id="CHEBI:30616"/>
    </ligand>
</feature>
<name>RAPA_ECOL5</name>
<sequence length="968" mass="109770">MPFTLGQRWISDTESELGLGTVVAVDARTVTLLFPSTGENRLYARSDSPVTRVMFNPGDTITSHDGWQMQVEEVKEENGLLTYIGTRLDTEESGVALREVFLDSKLVFSKPQDRLFAGQIDRMDRFALRYRARKYSSEQFRMPYSGLRGQRTSLIPHQLNIAHDVGRRHAPRVLLADEVGLGKTIEAGMILHQQLLSGAAERVLIIVPETLQHQWLVEMLRRFNLRFALFDDERYAEAQHDAYNPFDTEQLVICSLDFARRSKQRLEHLCEAEWDLLVVDEAHHLVWSEDAPSREYQAIEQLAEHVPGVLLLTATPEQLGMESHFARLRLLDPNRFHDFAQFVEEQKNYRPVADAVAMLLAGNKLSNDELNMLGEMIGEQDIEPLLQAANSDSEDAQSARQELVSMLMDRHGTSRVLFRNTRNGVKGFPKRELHTIKLPLPTQYQTAIKVSGIMGARKSAEDRARDMLYPERIYQEFEGDNATWWNFDPRVEWLMGYLTSHRSQKVLVICAKAATALQLEQVLREREGIRAAVFHEGMSIIERDRAAAWFAEEDTGAQVLLCSEIGSEGRNFQFASHMVMFDLPFNPDLLEQRIGRLDRIGQAHDIQIHVPYLEKTAQSVLVRWYHEGLDAFEHTCPTGRTIYDSVYNDLINYLASPDETEGFDDLIKNCREQHEALKAQLEQGRDRLLEIHSNGGEKAQALAESIEEQDDDTNLIAFAMNLFDIIGINQDDRGDNMIVLTPSDHMLVPDFPGLSEDGITITFDREVALAREDAQFITWEHPLIRNGLDLILSGDTGSSTISLLKNKALPVGTLLVELIYVVEAQAPKQLQLNRFLPPTPVRMLLDKNGNNLAAQVEFETFNRQLNAVNRHTGSKLVNAVQQDVHAILQLGEAQIEKSARALIDAARNEADEKLSAELSRLEALRAVNPNIRDDELTAIESNRQQVMESLDQAGWRLDALRLIVVTHQ</sequence>
<dbReference type="EC" id="3.6.4.-" evidence="1"/>
<dbReference type="EMBL" id="CP000247">
    <property type="protein sequence ID" value="ABG68100.1"/>
    <property type="molecule type" value="Genomic_DNA"/>
</dbReference>
<dbReference type="RefSeq" id="WP_001117001.1">
    <property type="nucleotide sequence ID" value="NC_008253.1"/>
</dbReference>
<dbReference type="SMR" id="Q0TLT1"/>
<dbReference type="KEGG" id="ecp:ECP_0060"/>
<dbReference type="HOGENOM" id="CLU_011520_0_0_6"/>
<dbReference type="Proteomes" id="UP000009182">
    <property type="component" value="Chromosome"/>
</dbReference>
<dbReference type="GO" id="GO:0005524">
    <property type="term" value="F:ATP binding"/>
    <property type="evidence" value="ECO:0007669"/>
    <property type="project" value="UniProtKB-UniRule"/>
</dbReference>
<dbReference type="GO" id="GO:0003677">
    <property type="term" value="F:DNA binding"/>
    <property type="evidence" value="ECO:0007669"/>
    <property type="project" value="UniProtKB-KW"/>
</dbReference>
<dbReference type="GO" id="GO:0004386">
    <property type="term" value="F:helicase activity"/>
    <property type="evidence" value="ECO:0007669"/>
    <property type="project" value="UniProtKB-UniRule"/>
</dbReference>
<dbReference type="GO" id="GO:0016817">
    <property type="term" value="F:hydrolase activity, acting on acid anhydrides"/>
    <property type="evidence" value="ECO:0007669"/>
    <property type="project" value="InterPro"/>
</dbReference>
<dbReference type="GO" id="GO:0006355">
    <property type="term" value="P:regulation of DNA-templated transcription"/>
    <property type="evidence" value="ECO:0007669"/>
    <property type="project" value="UniProtKB-UniRule"/>
</dbReference>
<dbReference type="CDD" id="cd18011">
    <property type="entry name" value="DEXDc_RapA"/>
    <property type="match status" value="1"/>
</dbReference>
<dbReference type="CDD" id="cd18793">
    <property type="entry name" value="SF2_C_SNF"/>
    <property type="match status" value="1"/>
</dbReference>
<dbReference type="FunFam" id="2.30.30.140:FF:000020">
    <property type="entry name" value="RNA polymerase-associated protein RapA"/>
    <property type="match status" value="1"/>
</dbReference>
<dbReference type="FunFam" id="2.30.30.930:FF:000001">
    <property type="entry name" value="RNA polymerase-associated protein RapA"/>
    <property type="match status" value="1"/>
</dbReference>
<dbReference type="FunFam" id="3.30.360.80:FF:000001">
    <property type="entry name" value="RNA polymerase-associated protein RapA"/>
    <property type="match status" value="1"/>
</dbReference>
<dbReference type="FunFam" id="3.40.50.10810:FF:000012">
    <property type="entry name" value="RNA polymerase-associated protein RapA"/>
    <property type="match status" value="1"/>
</dbReference>
<dbReference type="FunFam" id="3.40.50.300:FF:000350">
    <property type="entry name" value="RNA polymerase-associated protein RapA"/>
    <property type="match status" value="1"/>
</dbReference>
<dbReference type="Gene3D" id="2.30.30.140">
    <property type="match status" value="1"/>
</dbReference>
<dbReference type="Gene3D" id="2.30.30.930">
    <property type="match status" value="1"/>
</dbReference>
<dbReference type="Gene3D" id="3.30.360.80">
    <property type="match status" value="1"/>
</dbReference>
<dbReference type="Gene3D" id="6.10.140.1500">
    <property type="match status" value="1"/>
</dbReference>
<dbReference type="Gene3D" id="6.10.140.2230">
    <property type="match status" value="1"/>
</dbReference>
<dbReference type="Gene3D" id="3.40.50.300">
    <property type="entry name" value="P-loop containing nucleotide triphosphate hydrolases"/>
    <property type="match status" value="1"/>
</dbReference>
<dbReference type="Gene3D" id="3.40.50.10810">
    <property type="entry name" value="Tandem AAA-ATPase domain"/>
    <property type="match status" value="1"/>
</dbReference>
<dbReference type="HAMAP" id="MF_01821">
    <property type="entry name" value="Helicase_RapA"/>
    <property type="match status" value="1"/>
</dbReference>
<dbReference type="InterPro" id="IPR014001">
    <property type="entry name" value="Helicase_ATP-bd"/>
</dbReference>
<dbReference type="InterPro" id="IPR001650">
    <property type="entry name" value="Helicase_C-like"/>
</dbReference>
<dbReference type="InterPro" id="IPR023949">
    <property type="entry name" value="Helicase_RapA"/>
</dbReference>
<dbReference type="InterPro" id="IPR027417">
    <property type="entry name" value="P-loop_NTPase"/>
</dbReference>
<dbReference type="InterPro" id="IPR022737">
    <property type="entry name" value="RapA_C"/>
</dbReference>
<dbReference type="InterPro" id="IPR038718">
    <property type="entry name" value="SNF2-like_sf"/>
</dbReference>
<dbReference type="InterPro" id="IPR049730">
    <property type="entry name" value="SNF2/RAD54-like_C"/>
</dbReference>
<dbReference type="InterPro" id="IPR000330">
    <property type="entry name" value="SNF2_N"/>
</dbReference>
<dbReference type="InterPro" id="IPR040765">
    <property type="entry name" value="Tudor_1_RapA"/>
</dbReference>
<dbReference type="InterPro" id="IPR040766">
    <property type="entry name" value="Tudor_2_RapA"/>
</dbReference>
<dbReference type="NCBIfam" id="NF003426">
    <property type="entry name" value="PRK04914.1"/>
    <property type="match status" value="1"/>
</dbReference>
<dbReference type="PANTHER" id="PTHR45766">
    <property type="entry name" value="DNA ANNEALING HELICASE AND ENDONUCLEASE ZRANB3 FAMILY MEMBER"/>
    <property type="match status" value="1"/>
</dbReference>
<dbReference type="PANTHER" id="PTHR45766:SF6">
    <property type="entry name" value="SWI_SNF-RELATED MATRIX-ASSOCIATED ACTIN-DEPENDENT REGULATOR OF CHROMATIN SUBFAMILY A-LIKE PROTEIN 1"/>
    <property type="match status" value="1"/>
</dbReference>
<dbReference type="Pfam" id="PF00271">
    <property type="entry name" value="Helicase_C"/>
    <property type="match status" value="1"/>
</dbReference>
<dbReference type="Pfam" id="PF12137">
    <property type="entry name" value="RapA_C"/>
    <property type="match status" value="1"/>
</dbReference>
<dbReference type="Pfam" id="PF00176">
    <property type="entry name" value="SNF2-rel_dom"/>
    <property type="match status" value="1"/>
</dbReference>
<dbReference type="Pfam" id="PF18339">
    <property type="entry name" value="Tudor_1_RapA"/>
    <property type="match status" value="1"/>
</dbReference>
<dbReference type="Pfam" id="PF18337">
    <property type="entry name" value="Tudor_RapA"/>
    <property type="match status" value="1"/>
</dbReference>
<dbReference type="SMART" id="SM00487">
    <property type="entry name" value="DEXDc"/>
    <property type="match status" value="1"/>
</dbReference>
<dbReference type="SMART" id="SM00490">
    <property type="entry name" value="HELICc"/>
    <property type="match status" value="1"/>
</dbReference>
<dbReference type="SUPFAM" id="SSF52540">
    <property type="entry name" value="P-loop containing nucleoside triphosphate hydrolases"/>
    <property type="match status" value="2"/>
</dbReference>
<dbReference type="PROSITE" id="PS51192">
    <property type="entry name" value="HELICASE_ATP_BIND_1"/>
    <property type="match status" value="1"/>
</dbReference>
<dbReference type="PROSITE" id="PS51194">
    <property type="entry name" value="HELICASE_CTER"/>
    <property type="match status" value="1"/>
</dbReference>
<reference key="1">
    <citation type="journal article" date="2006" name="Mol. Microbiol.">
        <title>Role of pathogenicity island-associated integrases in the genome plasticity of uropathogenic Escherichia coli strain 536.</title>
        <authorList>
            <person name="Hochhut B."/>
            <person name="Wilde C."/>
            <person name="Balling G."/>
            <person name="Middendorf B."/>
            <person name="Dobrindt U."/>
            <person name="Brzuszkiewicz E."/>
            <person name="Gottschalk G."/>
            <person name="Carniel E."/>
            <person name="Hacker J."/>
        </authorList>
    </citation>
    <scope>NUCLEOTIDE SEQUENCE [LARGE SCALE GENOMIC DNA]</scope>
    <source>
        <strain>536 / UPEC</strain>
    </source>
</reference>
<accession>Q0TLT1</accession>
<proteinExistence type="inferred from homology"/>
<evidence type="ECO:0000255" key="1">
    <source>
        <dbReference type="HAMAP-Rule" id="MF_01821"/>
    </source>
</evidence>